<name>SUCC_ALKOO</name>
<accession>A8MM16</accession>
<organism>
    <name type="scientific">Alkaliphilus oremlandii (strain OhILAs)</name>
    <name type="common">Clostridium oremlandii (strain OhILAs)</name>
    <dbReference type="NCBI Taxonomy" id="350688"/>
    <lineage>
        <taxon>Bacteria</taxon>
        <taxon>Bacillati</taxon>
        <taxon>Bacillota</taxon>
        <taxon>Clostridia</taxon>
        <taxon>Peptostreptococcales</taxon>
        <taxon>Natronincolaceae</taxon>
        <taxon>Alkaliphilus</taxon>
    </lineage>
</organism>
<gene>
    <name evidence="1" type="primary">sucC</name>
    <name type="ordered locus">Clos_0623</name>
</gene>
<sequence>MNIHEYQAKELLRDYGVPVPRGQVIYDVRDAQRAAWHIESDIAVVKAQIHAGGRGKAGGVKIAKSITEVEQFSRELLGKTLVTHQTGQEGRVVKAILIEEGCEIYKEYYIAFTLDRENSKIALIASEEGGMDIEEVAANRPDKILKEIIDPLIGLTDFQGRRVCFNLNIDGSLINDTVELMKNLYRCFIEKDCSLLEINPLVITKNNRVMALDAKINFDGNGLYRNEDVLKLRDLNEEDEKEIEASKYNLSYISLDGNIGCMVNGAGLAMATMDIIKLYGGNPANFLDVGGGASEEKVMNAFKIILSDPKVKGIFVNIFGGIMKCDVIAKGIVNAANEVKLNVPLVVRLEGTNVELGKEILNQSNLNIVTATTMADGAKKIVKLIK</sequence>
<keyword id="KW-0067">ATP-binding</keyword>
<keyword id="KW-0436">Ligase</keyword>
<keyword id="KW-0460">Magnesium</keyword>
<keyword id="KW-0479">Metal-binding</keyword>
<keyword id="KW-0547">Nucleotide-binding</keyword>
<keyword id="KW-1185">Reference proteome</keyword>
<keyword id="KW-0816">Tricarboxylic acid cycle</keyword>
<comment type="function">
    <text evidence="1">Succinyl-CoA synthetase functions in the citric acid cycle (TCA), coupling the hydrolysis of succinyl-CoA to the synthesis of either ATP or GTP and thus represents the only step of substrate-level phosphorylation in the TCA. The beta subunit provides nucleotide specificity of the enzyme and binds the substrate succinate, while the binding sites for coenzyme A and phosphate are found in the alpha subunit.</text>
</comment>
<comment type="catalytic activity">
    <reaction evidence="1">
        <text>succinate + ATP + CoA = succinyl-CoA + ADP + phosphate</text>
        <dbReference type="Rhea" id="RHEA:17661"/>
        <dbReference type="ChEBI" id="CHEBI:30031"/>
        <dbReference type="ChEBI" id="CHEBI:30616"/>
        <dbReference type="ChEBI" id="CHEBI:43474"/>
        <dbReference type="ChEBI" id="CHEBI:57287"/>
        <dbReference type="ChEBI" id="CHEBI:57292"/>
        <dbReference type="ChEBI" id="CHEBI:456216"/>
        <dbReference type="EC" id="6.2.1.5"/>
    </reaction>
    <physiologicalReaction direction="right-to-left" evidence="1">
        <dbReference type="Rhea" id="RHEA:17663"/>
    </physiologicalReaction>
</comment>
<comment type="catalytic activity">
    <reaction evidence="1">
        <text>GTP + succinate + CoA = succinyl-CoA + GDP + phosphate</text>
        <dbReference type="Rhea" id="RHEA:22120"/>
        <dbReference type="ChEBI" id="CHEBI:30031"/>
        <dbReference type="ChEBI" id="CHEBI:37565"/>
        <dbReference type="ChEBI" id="CHEBI:43474"/>
        <dbReference type="ChEBI" id="CHEBI:57287"/>
        <dbReference type="ChEBI" id="CHEBI:57292"/>
        <dbReference type="ChEBI" id="CHEBI:58189"/>
    </reaction>
    <physiologicalReaction direction="right-to-left" evidence="1">
        <dbReference type="Rhea" id="RHEA:22122"/>
    </physiologicalReaction>
</comment>
<comment type="cofactor">
    <cofactor evidence="1">
        <name>Mg(2+)</name>
        <dbReference type="ChEBI" id="CHEBI:18420"/>
    </cofactor>
    <text evidence="1">Binds 1 Mg(2+) ion per subunit.</text>
</comment>
<comment type="pathway">
    <text evidence="1">Carbohydrate metabolism; tricarboxylic acid cycle; succinate from succinyl-CoA (ligase route): step 1/1.</text>
</comment>
<comment type="subunit">
    <text evidence="1">Heterotetramer of two alpha and two beta subunits.</text>
</comment>
<comment type="similarity">
    <text evidence="1">Belongs to the succinate/malate CoA ligase beta subunit family.</text>
</comment>
<protein>
    <recommendedName>
        <fullName evidence="1">Succinate--CoA ligase [ADP-forming] subunit beta</fullName>
        <ecNumber evidence="1">6.2.1.5</ecNumber>
    </recommendedName>
    <alternativeName>
        <fullName evidence="1">Succinyl-CoA synthetase subunit beta</fullName>
        <shortName evidence="1">SCS-beta</shortName>
    </alternativeName>
</protein>
<feature type="chain" id="PRO_1000081997" description="Succinate--CoA ligase [ADP-forming] subunit beta">
    <location>
        <begin position="1"/>
        <end position="386"/>
    </location>
</feature>
<feature type="domain" description="ATP-grasp" evidence="1">
    <location>
        <begin position="9"/>
        <end position="244"/>
    </location>
</feature>
<feature type="binding site" evidence="1">
    <location>
        <position position="46"/>
    </location>
    <ligand>
        <name>ATP</name>
        <dbReference type="ChEBI" id="CHEBI:30616"/>
    </ligand>
</feature>
<feature type="binding site" evidence="1">
    <location>
        <begin position="53"/>
        <end position="55"/>
    </location>
    <ligand>
        <name>ATP</name>
        <dbReference type="ChEBI" id="CHEBI:30616"/>
    </ligand>
</feature>
<feature type="binding site" evidence="1">
    <location>
        <position position="99"/>
    </location>
    <ligand>
        <name>ATP</name>
        <dbReference type="ChEBI" id="CHEBI:30616"/>
    </ligand>
</feature>
<feature type="binding site" evidence="1">
    <location>
        <position position="102"/>
    </location>
    <ligand>
        <name>ATP</name>
        <dbReference type="ChEBI" id="CHEBI:30616"/>
    </ligand>
</feature>
<feature type="binding site" evidence="1">
    <location>
        <position position="107"/>
    </location>
    <ligand>
        <name>ATP</name>
        <dbReference type="ChEBI" id="CHEBI:30616"/>
    </ligand>
</feature>
<feature type="binding site" evidence="1">
    <location>
        <position position="199"/>
    </location>
    <ligand>
        <name>Mg(2+)</name>
        <dbReference type="ChEBI" id="CHEBI:18420"/>
    </ligand>
</feature>
<feature type="binding site" evidence="1">
    <location>
        <position position="213"/>
    </location>
    <ligand>
        <name>Mg(2+)</name>
        <dbReference type="ChEBI" id="CHEBI:18420"/>
    </ligand>
</feature>
<feature type="binding site" evidence="1">
    <location>
        <position position="264"/>
    </location>
    <ligand>
        <name>substrate</name>
        <note>ligand shared with subunit alpha</note>
    </ligand>
</feature>
<feature type="binding site" evidence="1">
    <location>
        <begin position="321"/>
        <end position="323"/>
    </location>
    <ligand>
        <name>substrate</name>
        <note>ligand shared with subunit alpha</note>
    </ligand>
</feature>
<evidence type="ECO:0000255" key="1">
    <source>
        <dbReference type="HAMAP-Rule" id="MF_00558"/>
    </source>
</evidence>
<proteinExistence type="inferred from homology"/>
<reference key="1">
    <citation type="submission" date="2007-10" db="EMBL/GenBank/DDBJ databases">
        <title>Complete genome of Alkaliphilus oremlandii OhILAs.</title>
        <authorList>
            <person name="Copeland A."/>
            <person name="Lucas S."/>
            <person name="Lapidus A."/>
            <person name="Barry K."/>
            <person name="Detter J.C."/>
            <person name="Glavina del Rio T."/>
            <person name="Hammon N."/>
            <person name="Israni S."/>
            <person name="Dalin E."/>
            <person name="Tice H."/>
            <person name="Pitluck S."/>
            <person name="Chain P."/>
            <person name="Malfatti S."/>
            <person name="Shin M."/>
            <person name="Vergez L."/>
            <person name="Schmutz J."/>
            <person name="Larimer F."/>
            <person name="Land M."/>
            <person name="Hauser L."/>
            <person name="Kyrpides N."/>
            <person name="Mikhailova N."/>
            <person name="Stolz J.F."/>
            <person name="Dawson A."/>
            <person name="Fisher E."/>
            <person name="Crable B."/>
            <person name="Perera E."/>
            <person name="Lisak J."/>
            <person name="Ranganathan M."/>
            <person name="Basu P."/>
            <person name="Richardson P."/>
        </authorList>
    </citation>
    <scope>NUCLEOTIDE SEQUENCE [LARGE SCALE GENOMIC DNA]</scope>
    <source>
        <strain>OhILAs</strain>
    </source>
</reference>
<dbReference type="EC" id="6.2.1.5" evidence="1"/>
<dbReference type="EMBL" id="CP000853">
    <property type="protein sequence ID" value="ABW18183.1"/>
    <property type="molecule type" value="Genomic_DNA"/>
</dbReference>
<dbReference type="RefSeq" id="WP_012158497.1">
    <property type="nucleotide sequence ID" value="NC_009922.1"/>
</dbReference>
<dbReference type="SMR" id="A8MM16"/>
<dbReference type="STRING" id="350688.Clos_0623"/>
<dbReference type="KEGG" id="aoe:Clos_0623"/>
<dbReference type="eggNOG" id="COG0045">
    <property type="taxonomic scope" value="Bacteria"/>
</dbReference>
<dbReference type="HOGENOM" id="CLU_037430_0_2_9"/>
<dbReference type="OrthoDB" id="9802602at2"/>
<dbReference type="UniPathway" id="UPA00223">
    <property type="reaction ID" value="UER00999"/>
</dbReference>
<dbReference type="Proteomes" id="UP000000269">
    <property type="component" value="Chromosome"/>
</dbReference>
<dbReference type="GO" id="GO:0005829">
    <property type="term" value="C:cytosol"/>
    <property type="evidence" value="ECO:0007669"/>
    <property type="project" value="TreeGrafter"/>
</dbReference>
<dbReference type="GO" id="GO:0042709">
    <property type="term" value="C:succinate-CoA ligase complex"/>
    <property type="evidence" value="ECO:0007669"/>
    <property type="project" value="TreeGrafter"/>
</dbReference>
<dbReference type="GO" id="GO:0005524">
    <property type="term" value="F:ATP binding"/>
    <property type="evidence" value="ECO:0007669"/>
    <property type="project" value="UniProtKB-UniRule"/>
</dbReference>
<dbReference type="GO" id="GO:0000287">
    <property type="term" value="F:magnesium ion binding"/>
    <property type="evidence" value="ECO:0007669"/>
    <property type="project" value="UniProtKB-UniRule"/>
</dbReference>
<dbReference type="GO" id="GO:0004775">
    <property type="term" value="F:succinate-CoA ligase (ADP-forming) activity"/>
    <property type="evidence" value="ECO:0007669"/>
    <property type="project" value="UniProtKB-UniRule"/>
</dbReference>
<dbReference type="GO" id="GO:0004776">
    <property type="term" value="F:succinate-CoA ligase (GDP-forming) activity"/>
    <property type="evidence" value="ECO:0007669"/>
    <property type="project" value="RHEA"/>
</dbReference>
<dbReference type="GO" id="GO:0006104">
    <property type="term" value="P:succinyl-CoA metabolic process"/>
    <property type="evidence" value="ECO:0007669"/>
    <property type="project" value="TreeGrafter"/>
</dbReference>
<dbReference type="GO" id="GO:0006099">
    <property type="term" value="P:tricarboxylic acid cycle"/>
    <property type="evidence" value="ECO:0007669"/>
    <property type="project" value="UniProtKB-UniRule"/>
</dbReference>
<dbReference type="FunFam" id="3.30.1490.20:FF:000002">
    <property type="entry name" value="Succinate--CoA ligase [ADP-forming] subunit beta"/>
    <property type="match status" value="1"/>
</dbReference>
<dbReference type="FunFam" id="3.30.470.20:FF:000002">
    <property type="entry name" value="Succinate--CoA ligase [ADP-forming] subunit beta"/>
    <property type="match status" value="1"/>
</dbReference>
<dbReference type="FunFam" id="3.40.50.261:FF:000001">
    <property type="entry name" value="Succinate--CoA ligase [ADP-forming] subunit beta"/>
    <property type="match status" value="1"/>
</dbReference>
<dbReference type="Gene3D" id="3.30.1490.20">
    <property type="entry name" value="ATP-grasp fold, A domain"/>
    <property type="match status" value="1"/>
</dbReference>
<dbReference type="Gene3D" id="3.30.470.20">
    <property type="entry name" value="ATP-grasp fold, B domain"/>
    <property type="match status" value="1"/>
</dbReference>
<dbReference type="Gene3D" id="3.40.50.261">
    <property type="entry name" value="Succinyl-CoA synthetase domains"/>
    <property type="match status" value="1"/>
</dbReference>
<dbReference type="HAMAP" id="MF_00558">
    <property type="entry name" value="Succ_CoA_beta"/>
    <property type="match status" value="1"/>
</dbReference>
<dbReference type="InterPro" id="IPR011761">
    <property type="entry name" value="ATP-grasp"/>
</dbReference>
<dbReference type="InterPro" id="IPR013650">
    <property type="entry name" value="ATP-grasp_succ-CoA_synth-type"/>
</dbReference>
<dbReference type="InterPro" id="IPR013815">
    <property type="entry name" value="ATP_grasp_subdomain_1"/>
</dbReference>
<dbReference type="InterPro" id="IPR017866">
    <property type="entry name" value="Succ-CoA_synthase_bsu_CS"/>
</dbReference>
<dbReference type="InterPro" id="IPR005811">
    <property type="entry name" value="SUCC_ACL_C"/>
</dbReference>
<dbReference type="InterPro" id="IPR005809">
    <property type="entry name" value="Succ_CoA_ligase-like_bsu"/>
</dbReference>
<dbReference type="InterPro" id="IPR016102">
    <property type="entry name" value="Succinyl-CoA_synth-like"/>
</dbReference>
<dbReference type="NCBIfam" id="NF001913">
    <property type="entry name" value="PRK00696.1"/>
    <property type="match status" value="1"/>
</dbReference>
<dbReference type="NCBIfam" id="TIGR01016">
    <property type="entry name" value="sucCoAbeta"/>
    <property type="match status" value="1"/>
</dbReference>
<dbReference type="PANTHER" id="PTHR11815:SF10">
    <property type="entry name" value="SUCCINATE--COA LIGASE [GDP-FORMING] SUBUNIT BETA, MITOCHONDRIAL"/>
    <property type="match status" value="1"/>
</dbReference>
<dbReference type="PANTHER" id="PTHR11815">
    <property type="entry name" value="SUCCINYL-COA SYNTHETASE BETA CHAIN"/>
    <property type="match status" value="1"/>
</dbReference>
<dbReference type="Pfam" id="PF08442">
    <property type="entry name" value="ATP-grasp_2"/>
    <property type="match status" value="1"/>
</dbReference>
<dbReference type="Pfam" id="PF00549">
    <property type="entry name" value="Ligase_CoA"/>
    <property type="match status" value="1"/>
</dbReference>
<dbReference type="PIRSF" id="PIRSF001554">
    <property type="entry name" value="SucCS_beta"/>
    <property type="match status" value="1"/>
</dbReference>
<dbReference type="SUPFAM" id="SSF56059">
    <property type="entry name" value="Glutathione synthetase ATP-binding domain-like"/>
    <property type="match status" value="1"/>
</dbReference>
<dbReference type="SUPFAM" id="SSF52210">
    <property type="entry name" value="Succinyl-CoA synthetase domains"/>
    <property type="match status" value="1"/>
</dbReference>
<dbReference type="PROSITE" id="PS50975">
    <property type="entry name" value="ATP_GRASP"/>
    <property type="match status" value="1"/>
</dbReference>
<dbReference type="PROSITE" id="PS01217">
    <property type="entry name" value="SUCCINYL_COA_LIG_3"/>
    <property type="match status" value="1"/>
</dbReference>